<dbReference type="EC" id="3.5.4.16" evidence="2"/>
<dbReference type="EMBL" id="CP000241">
    <property type="protein sequence ID" value="ABF84976.1"/>
    <property type="molecule type" value="Genomic_DNA"/>
</dbReference>
<dbReference type="RefSeq" id="WP_000426976.1">
    <property type="nucleotide sequence ID" value="NC_008086.1"/>
</dbReference>
<dbReference type="SMR" id="Q1CSU6"/>
<dbReference type="KEGG" id="hpa:HPAG1_0909"/>
<dbReference type="HOGENOM" id="CLU_049768_3_4_7"/>
<dbReference type="UniPathway" id="UPA00848">
    <property type="reaction ID" value="UER00151"/>
</dbReference>
<dbReference type="GO" id="GO:0005737">
    <property type="term" value="C:cytoplasm"/>
    <property type="evidence" value="ECO:0007669"/>
    <property type="project" value="TreeGrafter"/>
</dbReference>
<dbReference type="GO" id="GO:0005525">
    <property type="term" value="F:GTP binding"/>
    <property type="evidence" value="ECO:0007669"/>
    <property type="project" value="UniProtKB-KW"/>
</dbReference>
<dbReference type="GO" id="GO:0003934">
    <property type="term" value="F:GTP cyclohydrolase I activity"/>
    <property type="evidence" value="ECO:0007669"/>
    <property type="project" value="UniProtKB-UniRule"/>
</dbReference>
<dbReference type="GO" id="GO:0008270">
    <property type="term" value="F:zinc ion binding"/>
    <property type="evidence" value="ECO:0007669"/>
    <property type="project" value="UniProtKB-UniRule"/>
</dbReference>
<dbReference type="GO" id="GO:0006730">
    <property type="term" value="P:one-carbon metabolic process"/>
    <property type="evidence" value="ECO:0007669"/>
    <property type="project" value="UniProtKB-UniRule"/>
</dbReference>
<dbReference type="GO" id="GO:0006729">
    <property type="term" value="P:tetrahydrobiopterin biosynthetic process"/>
    <property type="evidence" value="ECO:0007669"/>
    <property type="project" value="TreeGrafter"/>
</dbReference>
<dbReference type="GO" id="GO:0046654">
    <property type="term" value="P:tetrahydrofolate biosynthetic process"/>
    <property type="evidence" value="ECO:0007669"/>
    <property type="project" value="UniProtKB-UniRule"/>
</dbReference>
<dbReference type="FunFam" id="3.30.1130.10:FF:000001">
    <property type="entry name" value="GTP cyclohydrolase 1"/>
    <property type="match status" value="1"/>
</dbReference>
<dbReference type="Gene3D" id="1.10.286.10">
    <property type="match status" value="1"/>
</dbReference>
<dbReference type="Gene3D" id="3.30.1130.10">
    <property type="match status" value="1"/>
</dbReference>
<dbReference type="HAMAP" id="MF_00223">
    <property type="entry name" value="FolE"/>
    <property type="match status" value="1"/>
</dbReference>
<dbReference type="InterPro" id="IPR043133">
    <property type="entry name" value="GTP-CH-I_C/QueF"/>
</dbReference>
<dbReference type="InterPro" id="IPR043134">
    <property type="entry name" value="GTP-CH-I_N"/>
</dbReference>
<dbReference type="InterPro" id="IPR001474">
    <property type="entry name" value="GTP_CycHdrlase_I"/>
</dbReference>
<dbReference type="InterPro" id="IPR018234">
    <property type="entry name" value="GTP_CycHdrlase_I_CS"/>
</dbReference>
<dbReference type="InterPro" id="IPR020602">
    <property type="entry name" value="GTP_CycHdrlase_I_dom"/>
</dbReference>
<dbReference type="NCBIfam" id="TIGR00063">
    <property type="entry name" value="folE"/>
    <property type="match status" value="1"/>
</dbReference>
<dbReference type="NCBIfam" id="NF006825">
    <property type="entry name" value="PRK09347.1-2"/>
    <property type="match status" value="1"/>
</dbReference>
<dbReference type="NCBIfam" id="NF006826">
    <property type="entry name" value="PRK09347.1-3"/>
    <property type="match status" value="1"/>
</dbReference>
<dbReference type="PANTHER" id="PTHR11109:SF7">
    <property type="entry name" value="GTP CYCLOHYDROLASE 1"/>
    <property type="match status" value="1"/>
</dbReference>
<dbReference type="PANTHER" id="PTHR11109">
    <property type="entry name" value="GTP CYCLOHYDROLASE I"/>
    <property type="match status" value="1"/>
</dbReference>
<dbReference type="Pfam" id="PF01227">
    <property type="entry name" value="GTP_cyclohydroI"/>
    <property type="match status" value="1"/>
</dbReference>
<dbReference type="SUPFAM" id="SSF55620">
    <property type="entry name" value="Tetrahydrobiopterin biosynthesis enzymes-like"/>
    <property type="match status" value="1"/>
</dbReference>
<dbReference type="PROSITE" id="PS00859">
    <property type="entry name" value="GTP_CYCLOHYDROL_1_1"/>
    <property type="match status" value="1"/>
</dbReference>
<dbReference type="PROSITE" id="PS00860">
    <property type="entry name" value="GTP_CYCLOHYDROL_1_2"/>
    <property type="match status" value="1"/>
</dbReference>
<feature type="chain" id="PRO_1000043700" description="GTP cyclohydrolase 1">
    <location>
        <begin position="1"/>
        <end position="180"/>
    </location>
</feature>
<feature type="binding site" evidence="2">
    <location>
        <position position="71"/>
    </location>
    <ligand>
        <name>Zn(2+)</name>
        <dbReference type="ChEBI" id="CHEBI:29105"/>
    </ligand>
</feature>
<feature type="binding site" evidence="2">
    <location>
        <position position="74"/>
    </location>
    <ligand>
        <name>Zn(2+)</name>
        <dbReference type="ChEBI" id="CHEBI:29105"/>
    </ligand>
</feature>
<feature type="binding site" evidence="2">
    <location>
        <position position="142"/>
    </location>
    <ligand>
        <name>Zn(2+)</name>
        <dbReference type="ChEBI" id="CHEBI:29105"/>
    </ligand>
</feature>
<sequence length="180" mass="20899">MENFFNQFFENIGEDKNREGLKETPKRVQELWKFLYKGYKEDPRVALKSAYFQGVCDEMIVAQNIEFYSTCEHHLLPFLGNISLGYIPKEKIVGISAIAKLIEIYSKRLQIQERLTTQITETFDEIIEPRGVIVVCEAKHLCMSMQGVQKQNAIIKTSVLRGLFKKDPKTRAEFMQLLKS</sequence>
<gene>
    <name evidence="2" type="primary">folE</name>
    <name type="ordered locus">HPAG1_0909</name>
</gene>
<proteinExistence type="inferred from homology"/>
<protein>
    <recommendedName>
        <fullName evidence="2">GTP cyclohydrolase 1</fullName>
        <ecNumber evidence="2">3.5.4.16</ecNumber>
    </recommendedName>
    <alternativeName>
        <fullName evidence="2">GTP cyclohydrolase I</fullName>
        <shortName evidence="2">GTP-CH-I</shortName>
    </alternativeName>
</protein>
<organism>
    <name type="scientific">Helicobacter pylori (strain HPAG1)</name>
    <dbReference type="NCBI Taxonomy" id="357544"/>
    <lineage>
        <taxon>Bacteria</taxon>
        <taxon>Pseudomonadati</taxon>
        <taxon>Campylobacterota</taxon>
        <taxon>Epsilonproteobacteria</taxon>
        <taxon>Campylobacterales</taxon>
        <taxon>Helicobacteraceae</taxon>
        <taxon>Helicobacter</taxon>
    </lineage>
</organism>
<evidence type="ECO:0000250" key="1"/>
<evidence type="ECO:0000255" key="2">
    <source>
        <dbReference type="HAMAP-Rule" id="MF_00223"/>
    </source>
</evidence>
<accession>Q1CSU6</accession>
<reference key="1">
    <citation type="journal article" date="2006" name="Proc. Natl. Acad. Sci. U.S.A.">
        <title>The complete genome sequence of a chronic atrophic gastritis Helicobacter pylori strain: evolution during disease progression.</title>
        <authorList>
            <person name="Oh J.D."/>
            <person name="Kling-Baeckhed H."/>
            <person name="Giannakis M."/>
            <person name="Xu J."/>
            <person name="Fulton R.S."/>
            <person name="Fulton L.A."/>
            <person name="Cordum H.S."/>
            <person name="Wang C."/>
            <person name="Elliott G."/>
            <person name="Edwards J."/>
            <person name="Mardis E.R."/>
            <person name="Engstrand L.G."/>
            <person name="Gordon J.I."/>
        </authorList>
    </citation>
    <scope>NUCLEOTIDE SEQUENCE [LARGE SCALE GENOMIC DNA]</scope>
    <source>
        <strain>HPAG1</strain>
    </source>
</reference>
<comment type="catalytic activity">
    <reaction evidence="2">
        <text>GTP + H2O = 7,8-dihydroneopterin 3'-triphosphate + formate + H(+)</text>
        <dbReference type="Rhea" id="RHEA:17473"/>
        <dbReference type="ChEBI" id="CHEBI:15377"/>
        <dbReference type="ChEBI" id="CHEBI:15378"/>
        <dbReference type="ChEBI" id="CHEBI:15740"/>
        <dbReference type="ChEBI" id="CHEBI:37565"/>
        <dbReference type="ChEBI" id="CHEBI:58462"/>
        <dbReference type="EC" id="3.5.4.16"/>
    </reaction>
</comment>
<comment type="pathway">
    <text evidence="2">Cofactor biosynthesis; 7,8-dihydroneopterin triphosphate biosynthesis; 7,8-dihydroneopterin triphosphate from GTP: step 1/1.</text>
</comment>
<comment type="subunit">
    <text evidence="1">Toroid-shaped homodecamer, composed of two pentamers of five dimers.</text>
</comment>
<comment type="similarity">
    <text evidence="2">Belongs to the GTP cyclohydrolase I family.</text>
</comment>
<name>GCH1_HELPH</name>
<keyword id="KW-0342">GTP-binding</keyword>
<keyword id="KW-0378">Hydrolase</keyword>
<keyword id="KW-0479">Metal-binding</keyword>
<keyword id="KW-0547">Nucleotide-binding</keyword>
<keyword id="KW-0554">One-carbon metabolism</keyword>
<keyword id="KW-0862">Zinc</keyword>